<organism>
    <name type="scientific">Homo sapiens</name>
    <name type="common">Human</name>
    <dbReference type="NCBI Taxonomy" id="9606"/>
    <lineage>
        <taxon>Eukaryota</taxon>
        <taxon>Metazoa</taxon>
        <taxon>Chordata</taxon>
        <taxon>Craniata</taxon>
        <taxon>Vertebrata</taxon>
        <taxon>Euteleostomi</taxon>
        <taxon>Mammalia</taxon>
        <taxon>Eutheria</taxon>
        <taxon>Euarchontoglires</taxon>
        <taxon>Primates</taxon>
        <taxon>Haplorrhini</taxon>
        <taxon>Catarrhini</taxon>
        <taxon>Hominidae</taxon>
        <taxon>Homo</taxon>
    </lineage>
</organism>
<proteinExistence type="evidence at protein level"/>
<accession>Q3C1V8</accession>
<protein>
    <recommendedName>
        <fullName>Brain-specific homeobox protein homolog</fullName>
    </recommendedName>
</protein>
<evidence type="ECO:0000250" key="1"/>
<evidence type="ECO:0000250" key="2">
    <source>
        <dbReference type="UniProtKB" id="Q810B3"/>
    </source>
</evidence>
<evidence type="ECO:0000255" key="3">
    <source>
        <dbReference type="PROSITE-ProRule" id="PRU00108"/>
    </source>
</evidence>
<evidence type="ECO:0000256" key="4">
    <source>
        <dbReference type="SAM" id="MobiDB-lite"/>
    </source>
</evidence>
<evidence type="ECO:0000305" key="5"/>
<name>BSH_HUMAN</name>
<sequence length="233" mass="25933">MNLNFTSPLHPASSQRPTSFFIEDILLHKPKPLREVAPDHFASSLASRVPLLDYGYPLMPTPTLLAPHAHHPLHKGDHHHPYFLTTSGMPVPALFPHPQHAELPGKHCRRRKARTVFSDSQLSGLEKRFEIQRYLSTPERVELATALSLSETQVKTWFQNRRMKHKKQLRKSQDEPKAPDGPESPEGSPRGSEAATAAEARLSLPAGPFVLTEPEDEVDIGDEGELGSGPHVL</sequence>
<keyword id="KW-0010">Activator</keyword>
<keyword id="KW-0238">DNA-binding</keyword>
<keyword id="KW-0371">Homeobox</keyword>
<keyword id="KW-0539">Nucleus</keyword>
<keyword id="KW-1267">Proteomics identification</keyword>
<keyword id="KW-1185">Reference proteome</keyword>
<keyword id="KW-0804">Transcription</keyword>
<keyword id="KW-0805">Transcription regulation</keyword>
<feature type="chain" id="PRO_0000299170" description="Brain-specific homeobox protein homolog">
    <location>
        <begin position="1"/>
        <end position="233"/>
    </location>
</feature>
<feature type="DNA-binding region" description="Homeobox" evidence="3">
    <location>
        <begin position="110"/>
        <end position="169"/>
    </location>
</feature>
<feature type="region of interest" description="Disordered" evidence="4">
    <location>
        <begin position="160"/>
        <end position="233"/>
    </location>
</feature>
<feature type="compositionally biased region" description="Basic residues" evidence="4">
    <location>
        <begin position="161"/>
        <end position="170"/>
    </location>
</feature>
<feature type="compositionally biased region" description="Basic and acidic residues" evidence="4">
    <location>
        <begin position="171"/>
        <end position="180"/>
    </location>
</feature>
<feature type="compositionally biased region" description="Acidic residues" evidence="4">
    <location>
        <begin position="213"/>
        <end position="225"/>
    </location>
</feature>
<feature type="sequence conflict" description="In Ref. 2; BAE46889." evidence="5" ref="2">
    <original>G</original>
    <variation>S</variation>
    <location>
        <position position="55"/>
    </location>
</feature>
<gene>
    <name type="primary">BSX</name>
    <name type="synonym">BSX1</name>
</gene>
<comment type="function">
    <text evidence="1">DNA binding protein that function as transcriptional activator. Is essential for normal postnatal growth and nursing. Is an essential factor for neuronal neuropeptide Y and agouti-related peptide function and locomotory behavior in the control of energy balance (By similarity).</text>
</comment>
<comment type="subcellular location">
    <subcellularLocation>
        <location evidence="2">Nucleus</location>
    </subcellularLocation>
</comment>
<comment type="similarity">
    <text evidence="5">Belongs to the distal-less homeobox family.</text>
</comment>
<comment type="online information" name="Protein Spotlight">
    <link uri="https://www.proteinspotlight.org/back_issues/085"/>
    <text>Of fidgets and food - Issue 85 of August 2007</text>
</comment>
<reference key="1">
    <citation type="journal article" date="2006" name="Nature">
        <title>Human chromosome 11 DNA sequence and analysis including novel gene identification.</title>
        <authorList>
            <person name="Taylor T.D."/>
            <person name="Noguchi H."/>
            <person name="Totoki Y."/>
            <person name="Toyoda A."/>
            <person name="Kuroki Y."/>
            <person name="Dewar K."/>
            <person name="Lloyd C."/>
            <person name="Itoh T."/>
            <person name="Takeda T."/>
            <person name="Kim D.-W."/>
            <person name="She X."/>
            <person name="Barlow K.F."/>
            <person name="Bloom T."/>
            <person name="Bruford E."/>
            <person name="Chang J.L."/>
            <person name="Cuomo C.A."/>
            <person name="Eichler E."/>
            <person name="FitzGerald M.G."/>
            <person name="Jaffe D.B."/>
            <person name="LaButti K."/>
            <person name="Nicol R."/>
            <person name="Park H.-S."/>
            <person name="Seaman C."/>
            <person name="Sougnez C."/>
            <person name="Yang X."/>
            <person name="Zimmer A.R."/>
            <person name="Zody M.C."/>
            <person name="Birren B.W."/>
            <person name="Nusbaum C."/>
            <person name="Fujiyama A."/>
            <person name="Hattori M."/>
            <person name="Rogers J."/>
            <person name="Lander E.S."/>
            <person name="Sakaki Y."/>
        </authorList>
    </citation>
    <scope>NUCLEOTIDE SEQUENCE [LARGE SCALE GENOMIC DNA]</scope>
</reference>
<reference key="2">
    <citation type="submission" date="2005-08" db="EMBL/GenBank/DDBJ databases">
        <title>Identification of novel human genes predicted by combining multiple gene finders.</title>
        <authorList>
            <person name="Totoki Y."/>
            <person name="Yada T."/>
            <person name="Sakaki Y."/>
            <person name="Takeda T."/>
        </authorList>
    </citation>
    <scope>NUCLEOTIDE SEQUENCE [LARGE SCALE MRNA] OF 16-93</scope>
</reference>
<dbReference type="EMBL" id="AP003040">
    <property type="status" value="NOT_ANNOTATED_CDS"/>
    <property type="molecule type" value="Genomic_DNA"/>
</dbReference>
<dbReference type="EMBL" id="AB231738">
    <property type="protein sequence ID" value="BAE46889.1"/>
    <property type="molecule type" value="mRNA"/>
</dbReference>
<dbReference type="CCDS" id="CCDS41728.1"/>
<dbReference type="RefSeq" id="NP_001091639.1">
    <property type="nucleotide sequence ID" value="NM_001098169.2"/>
</dbReference>
<dbReference type="SMR" id="Q3C1V8"/>
<dbReference type="BioGRID" id="133475">
    <property type="interactions" value="1"/>
</dbReference>
<dbReference type="FunCoup" id="Q3C1V8">
    <property type="interactions" value="378"/>
</dbReference>
<dbReference type="IntAct" id="Q3C1V8">
    <property type="interactions" value="1"/>
</dbReference>
<dbReference type="STRING" id="9606.ENSP00000344285"/>
<dbReference type="GlyGen" id="Q3C1V8">
    <property type="glycosylation" value="1 site"/>
</dbReference>
<dbReference type="iPTMnet" id="Q3C1V8"/>
<dbReference type="PhosphoSitePlus" id="Q3C1V8"/>
<dbReference type="BioMuta" id="BSX"/>
<dbReference type="DMDM" id="156630463"/>
<dbReference type="MassIVE" id="Q3C1V8"/>
<dbReference type="PaxDb" id="9606-ENSP00000344285"/>
<dbReference type="PeptideAtlas" id="Q3C1V8"/>
<dbReference type="Antibodypedia" id="9208">
    <property type="antibodies" value="99 antibodies from 18 providers"/>
</dbReference>
<dbReference type="DNASU" id="390259"/>
<dbReference type="Ensembl" id="ENST00000343035.3">
    <property type="protein sequence ID" value="ENSP00000344285.2"/>
    <property type="gene ID" value="ENSG00000188909.5"/>
</dbReference>
<dbReference type="GeneID" id="390259"/>
<dbReference type="KEGG" id="hsa:390259"/>
<dbReference type="MANE-Select" id="ENST00000343035.3">
    <property type="protein sequence ID" value="ENSP00000344285.2"/>
    <property type="RefSeq nucleotide sequence ID" value="NM_001098169.2"/>
    <property type="RefSeq protein sequence ID" value="NP_001091639.1"/>
</dbReference>
<dbReference type="UCSC" id="uc010rzs.3">
    <property type="organism name" value="human"/>
</dbReference>
<dbReference type="AGR" id="HGNC:20450"/>
<dbReference type="CTD" id="390259"/>
<dbReference type="DisGeNET" id="390259"/>
<dbReference type="GeneCards" id="BSX"/>
<dbReference type="HGNC" id="HGNC:20450">
    <property type="gene designation" value="BSX"/>
</dbReference>
<dbReference type="HPA" id="ENSG00000188909">
    <property type="expression patterns" value="Not detected"/>
</dbReference>
<dbReference type="MIM" id="611074">
    <property type="type" value="gene"/>
</dbReference>
<dbReference type="neXtProt" id="NX_Q3C1V8"/>
<dbReference type="OpenTargets" id="ENSG00000188909"/>
<dbReference type="PharmGKB" id="PA162377618"/>
<dbReference type="VEuPathDB" id="HostDB:ENSG00000188909"/>
<dbReference type="eggNOG" id="KOG0491">
    <property type="taxonomic scope" value="Eukaryota"/>
</dbReference>
<dbReference type="GeneTree" id="ENSGT00940000161473"/>
<dbReference type="HOGENOM" id="CLU_104234_0_0_1"/>
<dbReference type="InParanoid" id="Q3C1V8"/>
<dbReference type="OMA" id="DLPGKHC"/>
<dbReference type="OrthoDB" id="6159439at2759"/>
<dbReference type="PAN-GO" id="Q3C1V8">
    <property type="GO annotations" value="3 GO annotations based on evolutionary models"/>
</dbReference>
<dbReference type="PhylomeDB" id="Q3C1V8"/>
<dbReference type="TreeFam" id="TF350735"/>
<dbReference type="PathwayCommons" id="Q3C1V8"/>
<dbReference type="SignaLink" id="Q3C1V8"/>
<dbReference type="BioGRID-ORCS" id="390259">
    <property type="hits" value="11 hits in 1168 CRISPR screens"/>
</dbReference>
<dbReference type="ChiTaRS" id="BSX">
    <property type="organism name" value="human"/>
</dbReference>
<dbReference type="GenomeRNAi" id="390259"/>
<dbReference type="Pharos" id="Q3C1V8">
    <property type="development level" value="Tbio"/>
</dbReference>
<dbReference type="PRO" id="PR:Q3C1V8"/>
<dbReference type="Proteomes" id="UP000005640">
    <property type="component" value="Chromosome 11"/>
</dbReference>
<dbReference type="RNAct" id="Q3C1V8">
    <property type="molecule type" value="protein"/>
</dbReference>
<dbReference type="Bgee" id="ENSG00000188909">
    <property type="expression patterns" value="Expressed in primordial germ cell in gonad and 1 other cell type or tissue"/>
</dbReference>
<dbReference type="GO" id="GO:0000785">
    <property type="term" value="C:chromatin"/>
    <property type="evidence" value="ECO:0000247"/>
    <property type="project" value="NTNU_SB"/>
</dbReference>
<dbReference type="GO" id="GO:0005634">
    <property type="term" value="C:nucleus"/>
    <property type="evidence" value="ECO:0007669"/>
    <property type="project" value="UniProtKB-SubCell"/>
</dbReference>
<dbReference type="GO" id="GO:0005667">
    <property type="term" value="C:transcription regulator complex"/>
    <property type="evidence" value="ECO:0007669"/>
    <property type="project" value="Ensembl"/>
</dbReference>
<dbReference type="GO" id="GO:0000981">
    <property type="term" value="F:DNA-binding transcription factor activity, RNA polymerase II-specific"/>
    <property type="evidence" value="ECO:0000247"/>
    <property type="project" value="NTNU_SB"/>
</dbReference>
<dbReference type="GO" id="GO:0000978">
    <property type="term" value="F:RNA polymerase II cis-regulatory region sequence-specific DNA binding"/>
    <property type="evidence" value="ECO:0000318"/>
    <property type="project" value="GO_Central"/>
</dbReference>
<dbReference type="GO" id="GO:1990837">
    <property type="term" value="F:sequence-specific double-stranded DNA binding"/>
    <property type="evidence" value="ECO:0000314"/>
    <property type="project" value="ARUK-UCL"/>
</dbReference>
<dbReference type="GO" id="GO:0030154">
    <property type="term" value="P:cell differentiation"/>
    <property type="evidence" value="ECO:0000318"/>
    <property type="project" value="GO_Central"/>
</dbReference>
<dbReference type="GO" id="GO:0042755">
    <property type="term" value="P:eating behavior"/>
    <property type="evidence" value="ECO:0007669"/>
    <property type="project" value="Ensembl"/>
</dbReference>
<dbReference type="GO" id="GO:0007626">
    <property type="term" value="P:locomotory behavior"/>
    <property type="evidence" value="ECO:0007669"/>
    <property type="project" value="Ensembl"/>
</dbReference>
<dbReference type="GO" id="GO:0060056">
    <property type="term" value="P:mammary gland involution"/>
    <property type="evidence" value="ECO:0007669"/>
    <property type="project" value="Ensembl"/>
</dbReference>
<dbReference type="GO" id="GO:0045944">
    <property type="term" value="P:positive regulation of transcription by RNA polymerase II"/>
    <property type="evidence" value="ECO:0007669"/>
    <property type="project" value="Ensembl"/>
</dbReference>
<dbReference type="GO" id="GO:0006357">
    <property type="term" value="P:regulation of transcription by RNA polymerase II"/>
    <property type="evidence" value="ECO:0000318"/>
    <property type="project" value="GO_Central"/>
</dbReference>
<dbReference type="GO" id="GO:0019827">
    <property type="term" value="P:stem cell population maintenance"/>
    <property type="evidence" value="ECO:0000318"/>
    <property type="project" value="GO_Central"/>
</dbReference>
<dbReference type="CDD" id="cd00086">
    <property type="entry name" value="homeodomain"/>
    <property type="match status" value="1"/>
</dbReference>
<dbReference type="FunFam" id="1.10.10.60:FF:000173">
    <property type="entry name" value="brain-specific homeobox protein homolog"/>
    <property type="match status" value="1"/>
</dbReference>
<dbReference type="Gene3D" id="1.10.10.60">
    <property type="entry name" value="Homeodomain-like"/>
    <property type="match status" value="1"/>
</dbReference>
<dbReference type="InterPro" id="IPR001356">
    <property type="entry name" value="HD"/>
</dbReference>
<dbReference type="InterPro" id="IPR020479">
    <property type="entry name" value="HD_metazoa"/>
</dbReference>
<dbReference type="InterPro" id="IPR017970">
    <property type="entry name" value="Homeobox_CS"/>
</dbReference>
<dbReference type="InterPro" id="IPR050848">
    <property type="entry name" value="Homeobox_TF"/>
</dbReference>
<dbReference type="InterPro" id="IPR009057">
    <property type="entry name" value="Homeodomain-like_sf"/>
</dbReference>
<dbReference type="PANTHER" id="PTHR24333:SF16">
    <property type="entry name" value="BRAIN-SPECIFIC HOMEOBOX"/>
    <property type="match status" value="1"/>
</dbReference>
<dbReference type="PANTHER" id="PTHR24333">
    <property type="entry name" value="HOMEO BOX HB9 LIKE A-RELATED"/>
    <property type="match status" value="1"/>
</dbReference>
<dbReference type="Pfam" id="PF00046">
    <property type="entry name" value="Homeodomain"/>
    <property type="match status" value="1"/>
</dbReference>
<dbReference type="PRINTS" id="PR00024">
    <property type="entry name" value="HOMEOBOX"/>
</dbReference>
<dbReference type="SMART" id="SM00389">
    <property type="entry name" value="HOX"/>
    <property type="match status" value="1"/>
</dbReference>
<dbReference type="SUPFAM" id="SSF46689">
    <property type="entry name" value="Homeodomain-like"/>
    <property type="match status" value="1"/>
</dbReference>
<dbReference type="PROSITE" id="PS00027">
    <property type="entry name" value="HOMEOBOX_1"/>
    <property type="match status" value="1"/>
</dbReference>
<dbReference type="PROSITE" id="PS50071">
    <property type="entry name" value="HOMEOBOX_2"/>
    <property type="match status" value="1"/>
</dbReference>